<feature type="chain" id="PRO_0000167607" description="NADPH--cytochrome P450 reductase">
    <location>
        <begin position="1"/>
        <end position="736"/>
    </location>
</feature>
<feature type="topological domain" description="Lumenal" evidence="1">
    <location>
        <position position="1"/>
    </location>
</feature>
<feature type="transmembrane region" description="Helical" evidence="1">
    <location>
        <begin position="2"/>
        <end position="24"/>
    </location>
</feature>
<feature type="topological domain" description="Cytoplasmic" evidence="1">
    <location>
        <begin position="25"/>
        <end position="736"/>
    </location>
</feature>
<feature type="domain" description="Flavodoxin-like" evidence="1">
    <location>
        <begin position="66"/>
        <end position="216"/>
    </location>
</feature>
<feature type="domain" description="FAD-binding FR-type" evidence="1">
    <location>
        <begin position="269"/>
        <end position="546"/>
    </location>
</feature>
<feature type="binding site" evidence="1">
    <location>
        <begin position="72"/>
        <end position="77"/>
    </location>
    <ligand>
        <name>FMN</name>
        <dbReference type="ChEBI" id="CHEBI:58210"/>
    </ligand>
</feature>
<feature type="binding site" evidence="1">
    <location>
        <begin position="123"/>
        <end position="126"/>
    </location>
    <ligand>
        <name>FMN</name>
        <dbReference type="ChEBI" id="CHEBI:58210"/>
    </ligand>
</feature>
<feature type="binding site" evidence="1">
    <location>
        <begin position="165"/>
        <end position="174"/>
    </location>
    <ligand>
        <name>FMN</name>
        <dbReference type="ChEBI" id="CHEBI:58210"/>
    </ligand>
</feature>
<feature type="binding site" evidence="1">
    <location>
        <position position="200"/>
    </location>
    <ligand>
        <name>FMN</name>
        <dbReference type="ChEBI" id="CHEBI:58210"/>
    </ligand>
</feature>
<feature type="binding site" evidence="1">
    <location>
        <position position="289"/>
    </location>
    <ligand>
        <name>NADP(+)</name>
        <dbReference type="ChEBI" id="CHEBI:58349"/>
    </ligand>
</feature>
<feature type="binding site" evidence="1">
    <location>
        <begin position="456"/>
        <end position="459"/>
    </location>
    <ligand>
        <name>FAD</name>
        <dbReference type="ChEBI" id="CHEBI:57692"/>
    </ligand>
</feature>
<feature type="binding site" evidence="1">
    <location>
        <begin position="474"/>
        <end position="476"/>
    </location>
    <ligand>
        <name>FAD</name>
        <dbReference type="ChEBI" id="CHEBI:57692"/>
    </ligand>
</feature>
<feature type="binding site" evidence="1">
    <location>
        <position position="480"/>
    </location>
    <ligand>
        <name>FAD</name>
        <dbReference type="ChEBI" id="CHEBI:57692"/>
    </ligand>
</feature>
<feature type="binding site" evidence="1">
    <location>
        <begin position="495"/>
        <end position="498"/>
    </location>
    <ligand>
        <name>FAD</name>
        <dbReference type="ChEBI" id="CHEBI:57692"/>
    </ligand>
</feature>
<feature type="binding site" evidence="1">
    <location>
        <position position="577"/>
    </location>
    <ligand>
        <name>NADP(+)</name>
        <dbReference type="ChEBI" id="CHEBI:58349"/>
    </ligand>
</feature>
<feature type="binding site" evidence="1">
    <location>
        <begin position="648"/>
        <end position="649"/>
    </location>
    <ligand>
        <name>NADP(+)</name>
        <dbReference type="ChEBI" id="CHEBI:58349"/>
    </ligand>
</feature>
<feature type="binding site" evidence="1">
    <location>
        <begin position="659"/>
        <end position="663"/>
    </location>
    <ligand>
        <name>NADP(+)</name>
        <dbReference type="ChEBI" id="CHEBI:58349"/>
    </ligand>
</feature>
<feature type="binding site" evidence="1">
    <location>
        <position position="735"/>
    </location>
    <ligand>
        <name>FAD</name>
        <dbReference type="ChEBI" id="CHEBI:57692"/>
    </ligand>
</feature>
<reference evidence="2" key="1">
    <citation type="journal article" date="2000" name="Curr. Genet.">
        <title>Cytochrome P450 oxidoreductase gene and its differentially terminated cDNAs from the white rot fungus Phanerochaete chrysosporium.</title>
        <authorList>
            <person name="Yadav J.S."/>
            <person name="Loper J.C."/>
        </authorList>
    </citation>
    <scope>NUCLEOTIDE SEQUENCE [GENOMIC DNA / MRNA]</scope>
    <source>
        <strain>ATCC 24725 / DSM 6909 / CBS 481.73 / BCRC 36200 / NRRL 6361 / VKM F-1767</strain>
    </source>
</reference>
<reference evidence="2" key="2">
    <citation type="journal article" date="2002" name="Biochem. Biophys. Res. Commun.">
        <title>Phanerochaete chrysosporium NADPH-cytochrome P450 reductase kinetic mechanism.</title>
        <authorList>
            <person name="Warrilow A.G.S."/>
            <person name="Lamb D.C."/>
            <person name="Kelly D.E."/>
            <person name="Kelly S.L."/>
        </authorList>
    </citation>
    <scope>KINETIC MECHANISM</scope>
</reference>
<evidence type="ECO:0000255" key="1">
    <source>
        <dbReference type="HAMAP-Rule" id="MF_03212"/>
    </source>
</evidence>
<evidence type="ECO:0000305" key="2"/>
<evidence type="ECO:0000312" key="3">
    <source>
        <dbReference type="EMBL" id="AAG31350.1"/>
    </source>
</evidence>
<comment type="function">
    <text evidence="1">This enzyme is required for electron transfer from NADP to cytochrome P450 in microsomes. It can also provide electron transfer to heme oxygenase and cytochrome B5. Involved in ergosterol biosynthesis.</text>
</comment>
<comment type="catalytic activity">
    <reaction evidence="1">
        <text>2 oxidized [cytochrome P450] + NADPH = 2 reduced [cytochrome P450] + NADP(+) + H(+)</text>
        <dbReference type="Rhea" id="RHEA:24040"/>
        <dbReference type="Rhea" id="RHEA-COMP:14627"/>
        <dbReference type="Rhea" id="RHEA-COMP:14628"/>
        <dbReference type="ChEBI" id="CHEBI:15378"/>
        <dbReference type="ChEBI" id="CHEBI:55376"/>
        <dbReference type="ChEBI" id="CHEBI:57783"/>
        <dbReference type="ChEBI" id="CHEBI:58349"/>
        <dbReference type="ChEBI" id="CHEBI:60344"/>
        <dbReference type="EC" id="1.6.2.4"/>
    </reaction>
</comment>
<comment type="cofactor">
    <cofactor evidence="1">
        <name>FAD</name>
        <dbReference type="ChEBI" id="CHEBI:57692"/>
    </cofactor>
    <text evidence="1">Binds 1 FAD per monomer.</text>
</comment>
<comment type="cofactor">
    <cofactor evidence="1">
        <name>FMN</name>
        <dbReference type="ChEBI" id="CHEBI:58210"/>
    </cofactor>
    <text evidence="1">Binds 1 FMN per monomer.</text>
</comment>
<comment type="subcellular location">
    <subcellularLocation>
        <location evidence="1">Endoplasmic reticulum membrane</location>
        <topology evidence="1">Single-pass membrane protein</topology>
        <orientation evidence="1">Cytoplasmic side</orientation>
    </subcellularLocation>
    <subcellularLocation>
        <location evidence="1">Mitochondrion outer membrane</location>
        <topology evidence="1">Single-pass membrane protein</topology>
        <orientation evidence="1">Cytoplasmic side</orientation>
    </subcellularLocation>
    <subcellularLocation>
        <location evidence="1">Cell membrane</location>
        <topology evidence="1">Single-pass membrane protein</topology>
        <orientation evidence="1">Cytoplasmic side</orientation>
    </subcellularLocation>
</comment>
<comment type="similarity">
    <text evidence="1">Belongs to the NADPH--cytochrome P450 reductase family.</text>
</comment>
<comment type="similarity">
    <text evidence="1">In the N-terminal section; belongs to the flavodoxin family.</text>
</comment>
<comment type="similarity">
    <text evidence="1">In the C-terminal section; belongs to the flavoprotein pyridine nucleotide cytochrome reductase family.</text>
</comment>
<proteinExistence type="evidence at transcript level"/>
<keyword id="KW-1003">Cell membrane</keyword>
<keyword id="KW-0256">Endoplasmic reticulum</keyword>
<keyword id="KW-0274">FAD</keyword>
<keyword id="KW-0285">Flavoprotein</keyword>
<keyword id="KW-0288">FMN</keyword>
<keyword id="KW-0444">Lipid biosynthesis</keyword>
<keyword id="KW-0443">Lipid metabolism</keyword>
<keyword id="KW-0472">Membrane</keyword>
<keyword id="KW-0496">Mitochondrion</keyword>
<keyword id="KW-1000">Mitochondrion outer membrane</keyword>
<keyword id="KW-0521">NADP</keyword>
<keyword id="KW-0560">Oxidoreductase</keyword>
<keyword id="KW-0752">Steroid biosynthesis</keyword>
<keyword id="KW-0753">Steroid metabolism</keyword>
<keyword id="KW-0756">Sterol biosynthesis</keyword>
<keyword id="KW-1207">Sterol metabolism</keyword>
<keyword id="KW-0812">Transmembrane</keyword>
<keyword id="KW-1133">Transmembrane helix</keyword>
<name>NCPR_PHACH</name>
<organism evidence="3">
    <name type="scientific">Phanerodontia chrysosporium</name>
    <name type="common">White-rot fungus</name>
    <name type="synonym">Sporotrichum pruinosum</name>
    <dbReference type="NCBI Taxonomy" id="2822231"/>
    <lineage>
        <taxon>Eukaryota</taxon>
        <taxon>Fungi</taxon>
        <taxon>Dikarya</taxon>
        <taxon>Basidiomycota</taxon>
        <taxon>Agaricomycotina</taxon>
        <taxon>Agaricomycetes</taxon>
        <taxon>Polyporales</taxon>
        <taxon>Phanerochaetaceae</taxon>
        <taxon>Phanerodontia</taxon>
    </lineage>
</organism>
<sequence>MAVSSSSDVIVLSVGIILAALYLFREQIFSAAKPKTVQVPSSKAAAGGNGNPRDFIAKMKEGKKRIVIFYGSQTGTAEEYAIRLAKEAKSKFGLASLVCDPEEYDFENLDQVPEDCCVFFVMATYGEGEPTDNAVQLCQNLSDESFEFSNGEHKLPGLKYVIFGLGNKTYEHYNLISRNVDRDLQKMGAIRIGERGEGDDDKSMEEDYLEWKDGMWEAFAKAMNVEEGQGGDSPDFVVTEVFDHPEEKVYLGELSARALTRTKGIHDAKNPYPAPIIAAKELFAPGSDRNCVHIELSTESSGITYQHGDHVGVWPSNADKEVDRLLYALGLHEKKDTVINIESLDPALAKVPFPVPTTYATVLRHYIDISALAGRQILGVLAKFAPNPEAEAVLKDLNSNKEHYQNIVANGCMKLGEVLQYAAGNDLHADPTASNTTAWKIPFDIIVSSIPRLQPRYYSISSSPKLYPNAIHATVVVLKYKSEKAPRVEERWIYGVGSNFLLNLKYASHHDKAATLVSDDSPSEPSIVSHYPTYSIEGPRGAYKQGDVVKVPIHVRRSTFRLPTNPKSPVIMIGPGTGVAPFRGFVQERVAMARRTIEKHGPEGLADWGPIRLYYGCRRSDQDFLYKDEWPEYAKELHGKFIMRCAFSREPPYKPDGSKIYVQDLIWEDAEQIADAILNGKGYVYICGDAKSMSKSVEETLCRILGEAKGGSAEVEGAAELKLLKERNRLLLDVWS</sequence>
<dbReference type="EC" id="1.6.2.4" evidence="1"/>
<dbReference type="EMBL" id="AF193060">
    <property type="protein sequence ID" value="AAG31349.1"/>
    <property type="molecule type" value="Genomic_DNA"/>
</dbReference>
<dbReference type="EMBL" id="AF193061">
    <property type="protein sequence ID" value="AAG31350.1"/>
    <property type="molecule type" value="mRNA"/>
</dbReference>
<dbReference type="EMBL" id="AF193062">
    <property type="protein sequence ID" value="AAG31351.1"/>
    <property type="molecule type" value="mRNA"/>
</dbReference>
<dbReference type="SMR" id="Q9HDG2"/>
<dbReference type="EnsemblFungi" id="AGR57_11060T0">
    <property type="protein sequence ID" value="AGR57_11060T0-p1"/>
    <property type="gene ID" value="AGR57_11060"/>
</dbReference>
<dbReference type="VEuPathDB" id="FungiDB:AGR57_11060"/>
<dbReference type="OMA" id="QKRYQRD"/>
<dbReference type="BRENDA" id="1.6.2.4">
    <property type="organism ID" value="1380"/>
</dbReference>
<dbReference type="GO" id="GO:0005829">
    <property type="term" value="C:cytosol"/>
    <property type="evidence" value="ECO:0007669"/>
    <property type="project" value="TreeGrafter"/>
</dbReference>
<dbReference type="GO" id="GO:0005789">
    <property type="term" value="C:endoplasmic reticulum membrane"/>
    <property type="evidence" value="ECO:0007669"/>
    <property type="project" value="UniProtKB-SubCell"/>
</dbReference>
<dbReference type="GO" id="GO:0005741">
    <property type="term" value="C:mitochondrial outer membrane"/>
    <property type="evidence" value="ECO:0007669"/>
    <property type="project" value="UniProtKB-SubCell"/>
</dbReference>
<dbReference type="GO" id="GO:0005886">
    <property type="term" value="C:plasma membrane"/>
    <property type="evidence" value="ECO:0007669"/>
    <property type="project" value="UniProtKB-SubCell"/>
</dbReference>
<dbReference type="GO" id="GO:0050660">
    <property type="term" value="F:flavin adenine dinucleotide binding"/>
    <property type="evidence" value="ECO:0007669"/>
    <property type="project" value="UniProtKB-UniRule"/>
</dbReference>
<dbReference type="GO" id="GO:0010181">
    <property type="term" value="F:FMN binding"/>
    <property type="evidence" value="ECO:0007669"/>
    <property type="project" value="UniProtKB-UniRule"/>
</dbReference>
<dbReference type="GO" id="GO:0050661">
    <property type="term" value="F:NADP binding"/>
    <property type="evidence" value="ECO:0007669"/>
    <property type="project" value="UniProtKB-UniRule"/>
</dbReference>
<dbReference type="GO" id="GO:0003958">
    <property type="term" value="F:NADPH-hemoprotein reductase activity"/>
    <property type="evidence" value="ECO:0007669"/>
    <property type="project" value="UniProtKB-UniRule"/>
</dbReference>
<dbReference type="GO" id="GO:0006696">
    <property type="term" value="P:ergosterol biosynthetic process"/>
    <property type="evidence" value="ECO:0007669"/>
    <property type="project" value="UniProtKB-UniRule"/>
</dbReference>
<dbReference type="CDD" id="cd06204">
    <property type="entry name" value="CYPOR"/>
    <property type="match status" value="1"/>
</dbReference>
<dbReference type="FunFam" id="2.40.30.10:FF:000100">
    <property type="entry name" value="NADPH--cytochrome P450 reductase"/>
    <property type="match status" value="1"/>
</dbReference>
<dbReference type="FunFam" id="3.40.50.360:FF:000024">
    <property type="entry name" value="NADPH--cytochrome P450 reductase"/>
    <property type="match status" value="1"/>
</dbReference>
<dbReference type="FunFam" id="3.40.50.80:FF:000018">
    <property type="entry name" value="NADPH--cytochrome P450 reductase"/>
    <property type="match status" value="1"/>
</dbReference>
<dbReference type="Gene3D" id="3.40.50.360">
    <property type="match status" value="1"/>
</dbReference>
<dbReference type="Gene3D" id="1.20.990.10">
    <property type="entry name" value="NADPH-cytochrome p450 Reductase, Chain A, domain 3"/>
    <property type="match status" value="1"/>
</dbReference>
<dbReference type="Gene3D" id="3.40.50.80">
    <property type="entry name" value="Nucleotide-binding domain of ferredoxin-NADP reductase (FNR) module"/>
    <property type="match status" value="1"/>
</dbReference>
<dbReference type="Gene3D" id="2.40.30.10">
    <property type="entry name" value="Translation factors"/>
    <property type="match status" value="1"/>
</dbReference>
<dbReference type="HAMAP" id="MF_03212">
    <property type="entry name" value="NCPR"/>
    <property type="match status" value="1"/>
</dbReference>
<dbReference type="InterPro" id="IPR003097">
    <property type="entry name" value="CysJ-like_FAD-binding"/>
</dbReference>
<dbReference type="InterPro" id="IPR017927">
    <property type="entry name" value="FAD-bd_FR_type"/>
</dbReference>
<dbReference type="InterPro" id="IPR001094">
    <property type="entry name" value="Flavdoxin-like"/>
</dbReference>
<dbReference type="InterPro" id="IPR008254">
    <property type="entry name" value="Flavodoxin/NO_synth"/>
</dbReference>
<dbReference type="InterPro" id="IPR001709">
    <property type="entry name" value="Flavoprot_Pyr_Nucl_cyt_Rdtase"/>
</dbReference>
<dbReference type="InterPro" id="IPR029039">
    <property type="entry name" value="Flavoprotein-like_sf"/>
</dbReference>
<dbReference type="InterPro" id="IPR039261">
    <property type="entry name" value="FNR_nucleotide-bd"/>
</dbReference>
<dbReference type="InterPro" id="IPR023173">
    <property type="entry name" value="NADPH_Cyt_P450_Rdtase_alpha"/>
</dbReference>
<dbReference type="InterPro" id="IPR001433">
    <property type="entry name" value="OxRdtase_FAD/NAD-bd"/>
</dbReference>
<dbReference type="InterPro" id="IPR023208">
    <property type="entry name" value="P450R"/>
</dbReference>
<dbReference type="InterPro" id="IPR017938">
    <property type="entry name" value="Riboflavin_synthase-like_b-brl"/>
</dbReference>
<dbReference type="PANTHER" id="PTHR19384:SF17">
    <property type="entry name" value="NADPH--CYTOCHROME P450 REDUCTASE"/>
    <property type="match status" value="1"/>
</dbReference>
<dbReference type="PANTHER" id="PTHR19384">
    <property type="entry name" value="NITRIC OXIDE SYNTHASE-RELATED"/>
    <property type="match status" value="1"/>
</dbReference>
<dbReference type="Pfam" id="PF00667">
    <property type="entry name" value="FAD_binding_1"/>
    <property type="match status" value="1"/>
</dbReference>
<dbReference type="Pfam" id="PF00258">
    <property type="entry name" value="Flavodoxin_1"/>
    <property type="match status" value="1"/>
</dbReference>
<dbReference type="Pfam" id="PF00175">
    <property type="entry name" value="NAD_binding_1"/>
    <property type="match status" value="1"/>
</dbReference>
<dbReference type="PIRSF" id="PIRSF000208">
    <property type="entry name" value="P450R"/>
    <property type="match status" value="1"/>
</dbReference>
<dbReference type="PRINTS" id="PR00369">
    <property type="entry name" value="FLAVODOXIN"/>
</dbReference>
<dbReference type="PRINTS" id="PR00371">
    <property type="entry name" value="FPNCR"/>
</dbReference>
<dbReference type="SUPFAM" id="SSF52343">
    <property type="entry name" value="Ferredoxin reductase-like, C-terminal NADP-linked domain"/>
    <property type="match status" value="1"/>
</dbReference>
<dbReference type="SUPFAM" id="SSF52218">
    <property type="entry name" value="Flavoproteins"/>
    <property type="match status" value="1"/>
</dbReference>
<dbReference type="SUPFAM" id="SSF63380">
    <property type="entry name" value="Riboflavin synthase domain-like"/>
    <property type="match status" value="1"/>
</dbReference>
<dbReference type="PROSITE" id="PS51384">
    <property type="entry name" value="FAD_FR"/>
    <property type="match status" value="1"/>
</dbReference>
<dbReference type="PROSITE" id="PS50902">
    <property type="entry name" value="FLAVODOXIN_LIKE"/>
    <property type="match status" value="1"/>
</dbReference>
<gene>
    <name type="primary">CPR</name>
</gene>
<accession>Q9HDG2</accession>
<accession>Q9HG14</accession>
<protein>
    <recommendedName>
        <fullName evidence="1">NADPH--cytochrome P450 reductase</fullName>
        <shortName evidence="1">CPR</shortName>
        <shortName evidence="1">P450R</shortName>
        <ecNumber evidence="1">1.6.2.4</ecNumber>
    </recommendedName>
</protein>